<evidence type="ECO:0000250" key="1"/>
<evidence type="ECO:0000250" key="2">
    <source>
        <dbReference type="UniProtKB" id="P68617"/>
    </source>
</evidence>
<evidence type="ECO:0000255" key="3"/>
<evidence type="ECO:0000305" key="4"/>
<feature type="chain" id="PRO_0000448164" description="Protein OPG161">
    <location>
        <begin position="1"/>
        <end position="184"/>
    </location>
</feature>
<feature type="topological domain" description="Intravirion" evidence="1">
    <location>
        <begin position="1"/>
        <end position="33"/>
    </location>
</feature>
<feature type="transmembrane region" description="Helical" evidence="3">
    <location>
        <begin position="34"/>
        <end position="56"/>
    </location>
</feature>
<feature type="topological domain" description="Virion surface" evidence="1">
    <location>
        <begin position="57"/>
        <end position="184"/>
    </location>
</feature>
<feature type="region of interest" description="C-type lectin-like domain">
    <location>
        <begin position="98"/>
        <end position="184"/>
    </location>
</feature>
<feature type="glycosylation site" description="N-linked (GlcNAc...) asparagine; by host" evidence="3">
    <location>
        <position position="134"/>
    </location>
</feature>
<feature type="disulfide bond" description="Interchain">
    <location>
        <position position="62"/>
    </location>
</feature>
<keyword id="KW-1015">Disulfide bond</keyword>
<keyword id="KW-0325">Glycoprotein</keyword>
<keyword id="KW-1043">Host membrane</keyword>
<keyword id="KW-0472">Membrane</keyword>
<keyword id="KW-0735">Signal-anchor</keyword>
<keyword id="KW-0812">Transmembrane</keyword>
<keyword id="KW-1133">Transmembrane helix</keyword>
<keyword id="KW-0261">Viral envelope protein</keyword>
<keyword id="KW-0946">Virion</keyword>
<dbReference type="EMBL" id="L22579">
    <property type="protein sequence ID" value="AAA60888.1"/>
    <property type="molecule type" value="Genomic_DNA"/>
</dbReference>
<dbReference type="EMBL" id="X76266">
    <property type="protein sequence ID" value="CAA53862.1"/>
    <property type="molecule type" value="Genomic_DNA"/>
</dbReference>
<dbReference type="PIR" id="B72168">
    <property type="entry name" value="B72168"/>
</dbReference>
<dbReference type="PIR" id="T28578">
    <property type="entry name" value="T28578"/>
</dbReference>
<dbReference type="RefSeq" id="NP_042184.1">
    <property type="nucleotide sequence ID" value="NC_001611.1"/>
</dbReference>
<dbReference type="SMR" id="P0DON2"/>
<dbReference type="GeneID" id="1486514"/>
<dbReference type="KEGG" id="vg:1486514"/>
<dbReference type="Proteomes" id="UP000119805">
    <property type="component" value="Segment"/>
</dbReference>
<dbReference type="GO" id="GO:0033644">
    <property type="term" value="C:host cell membrane"/>
    <property type="evidence" value="ECO:0007669"/>
    <property type="project" value="UniProtKB-SubCell"/>
</dbReference>
<dbReference type="GO" id="GO:0016020">
    <property type="term" value="C:membrane"/>
    <property type="evidence" value="ECO:0007669"/>
    <property type="project" value="UniProtKB-KW"/>
</dbReference>
<dbReference type="GO" id="GO:0019031">
    <property type="term" value="C:viral envelope"/>
    <property type="evidence" value="ECO:0007669"/>
    <property type="project" value="UniProtKB-KW"/>
</dbReference>
<dbReference type="GO" id="GO:0055036">
    <property type="term" value="C:virion membrane"/>
    <property type="evidence" value="ECO:0007669"/>
    <property type="project" value="UniProtKB-SubCell"/>
</dbReference>
<dbReference type="Gene3D" id="3.10.100.10">
    <property type="entry name" value="Mannose-Binding Protein A, subunit A"/>
    <property type="match status" value="1"/>
</dbReference>
<dbReference type="InterPro" id="IPR016186">
    <property type="entry name" value="C-type_lectin-like/link_sf"/>
</dbReference>
<dbReference type="InterPro" id="IPR009238">
    <property type="entry name" value="Chordopox_A33R"/>
</dbReference>
<dbReference type="InterPro" id="IPR016187">
    <property type="entry name" value="CTDL_fold"/>
</dbReference>
<dbReference type="Pfam" id="PF05966">
    <property type="entry name" value="Chordopox_A33R"/>
    <property type="match status" value="1"/>
</dbReference>
<dbReference type="SUPFAM" id="SSF56436">
    <property type="entry name" value="C-type lectin-like"/>
    <property type="match status" value="1"/>
</dbReference>
<sequence length="184" mass="20512">MMTPENDEEQTSVFSATVYGDKIQGKNKRKRVIGICIRISMVISLLSMITMSAFLIVRLNQCMSANEAAITDATAVAAALSTHRKVASSTTQYKHQESCNGLYYQGSCYIFHSDYQLFSDAKANCATESSTLPNKSDVLTTWLIDYVEDTWGSDGNPITKTTTDYQDSDVSQEVRKYFCVKTMN</sequence>
<organism>
    <name type="scientific">Variola virus</name>
    <dbReference type="NCBI Taxonomy" id="10255"/>
    <lineage>
        <taxon>Viruses</taxon>
        <taxon>Varidnaviria</taxon>
        <taxon>Bamfordvirae</taxon>
        <taxon>Nucleocytoviricota</taxon>
        <taxon>Pokkesviricetes</taxon>
        <taxon>Chitovirales</taxon>
        <taxon>Poxviridae</taxon>
        <taxon>Chordopoxvirinae</taxon>
        <taxon>Orthopoxvirus</taxon>
    </lineage>
</organism>
<protein>
    <recommendedName>
        <fullName>Protein OPG161</fullName>
    </recommendedName>
</protein>
<accession>P0DON2</accession>
<accession>P33850</accession>
<name>PG161_VARV</name>
<comment type="function">
    <text evidence="2">Forms a complex with OPG162 and OPG190 to coordinate the incorporation of OPG164 into wrapped enveloped virion (EV) membranes and, subsequently, the production of actin tails. Therefore plays an essential role in efficient cell-to-cell spread of viral particles.</text>
</comment>
<comment type="subunit">
    <text evidence="2">Homodimer, disulfide-linked. Interacts with protein OPG190. Interacts (via C-terminus) with protein OPG164. Interacts with OPG162.</text>
</comment>
<comment type="subcellular location">
    <subcellularLocation>
        <location evidence="2">Virion membrane</location>
        <topology evidence="2">Single-pass type II membrane protein</topology>
    </subcellularLocation>
    <subcellularLocation>
        <location evidence="2">Host membrane</location>
        <topology evidence="2">Single-pass type II membrane protein</topology>
    </subcellularLocation>
    <text evidence="2">Component of the enveloped virion (EV) membrane.</text>
</comment>
<comment type="similarity">
    <text evidence="4">Belongs to the orthopoxvirus OPG161 family.</text>
</comment>
<organismHost>
    <name type="scientific">Homo sapiens</name>
    <name type="common">Human</name>
    <dbReference type="NCBI Taxonomy" id="9606"/>
</organismHost>
<proteinExistence type="evidence at protein level"/>
<gene>
    <name type="primary">OPG161</name>
    <name type="ORF">A33R</name>
    <name type="ORF">A36R</name>
</gene>
<reference key="1">
    <citation type="journal article" date="1992" name="J. Gen. Virol.">
        <title>Nucleotide sequence of 21.8 kbp of variola major virus strain Harvey and comparison with vaccinia virus.</title>
        <authorList>
            <person name="Aguado B."/>
            <person name="Selmes I.P."/>
            <person name="Smith G.L."/>
        </authorList>
    </citation>
    <scope>NUCLEOTIDE SEQUENCE [GENOMIC DNA]</scope>
    <source>
        <strain>Harvey</strain>
    </source>
</reference>
<reference key="2">
    <citation type="journal article" date="1993" name="Nature">
        <title>Potential virulence determinants in terminal regions of variola smallpox virus genome.</title>
        <authorList>
            <person name="Massung R.F."/>
            <person name="Esposito J.J."/>
            <person name="Liu L.I."/>
            <person name="Qi J."/>
            <person name="Utterback T.R."/>
            <person name="Knight J.C."/>
            <person name="Aubin L."/>
            <person name="Yuran T.E."/>
            <person name="Parsons J.M."/>
            <person name="Loparev V.N."/>
            <person name="Selivanov N.A."/>
            <person name="Cavallaro K.F."/>
            <person name="Kerlavage A.R."/>
            <person name="Mahy B.W.J."/>
            <person name="Venter J.C."/>
        </authorList>
    </citation>
    <scope>NUCLEOTIDE SEQUENCE [GENOMIC DNA]</scope>
    <source>
        <strain>Bangladesh-1975</strain>
    </source>
</reference>
<reference key="3">
    <citation type="submission" date="1995-12" db="EMBL/GenBank/DDBJ databases">
        <authorList>
            <person name="Shchelkunov S.N."/>
            <person name="Totmenin A.V."/>
            <person name="Resenchuk S.M."/>
            <person name="Blinov V.M."/>
            <person name="Sandakhchiev L.S."/>
        </authorList>
    </citation>
    <scope>NUCLEOTIDE SEQUENCE [GENOMIC DNA]</scope>
    <source>
        <strain>Garcia-1966</strain>
    </source>
</reference>